<comment type="catalytic activity">
    <reaction evidence="1">
        <text>L-arginine + H(+) = agmatine + CO2</text>
        <dbReference type="Rhea" id="RHEA:17641"/>
        <dbReference type="ChEBI" id="CHEBI:15378"/>
        <dbReference type="ChEBI" id="CHEBI:16526"/>
        <dbReference type="ChEBI" id="CHEBI:32682"/>
        <dbReference type="ChEBI" id="CHEBI:58145"/>
        <dbReference type="EC" id="4.1.1.19"/>
    </reaction>
</comment>
<comment type="cofactor">
    <cofactor evidence="1">
        <name>pyruvate</name>
        <dbReference type="ChEBI" id="CHEBI:15361"/>
    </cofactor>
    <text evidence="1">Binds 1 pyruvoyl group covalently per subunit.</text>
</comment>
<comment type="similarity">
    <text evidence="1">Belongs to the PdaD family.</text>
</comment>
<evidence type="ECO:0000255" key="1">
    <source>
        <dbReference type="HAMAP-Rule" id="MF_01404"/>
    </source>
</evidence>
<accession>A6UUL7</accession>
<organism>
    <name type="scientific">Methanococcus aeolicus (strain ATCC BAA-1280 / DSM 17508 / OCM 812 / Nankai-3)</name>
    <dbReference type="NCBI Taxonomy" id="419665"/>
    <lineage>
        <taxon>Archaea</taxon>
        <taxon>Methanobacteriati</taxon>
        <taxon>Methanobacteriota</taxon>
        <taxon>Methanomada group</taxon>
        <taxon>Methanococci</taxon>
        <taxon>Methanococcales</taxon>
        <taxon>Methanococcaceae</taxon>
        <taxon>Methanococcus</taxon>
    </lineage>
</organism>
<sequence length="165" mass="17639">MNDNISPIHSPYKAPNTISLVAGKGDTNNPLNAFDMALLDAGICNVNLIKISSIMPPKAEVVPLPDIPMGSLVPTAYGYKTSDIKGETVSAAVSVAIPKDKELCGLIMEYSAIGGKKETEDTVREMAKTGFEMRGWEIDKIISLASECTVENIGCAFAAVALWYK</sequence>
<name>PDAD_META3</name>
<dbReference type="EC" id="4.1.1.19" evidence="1"/>
<dbReference type="EMBL" id="CP000743">
    <property type="protein sequence ID" value="ABR56189.1"/>
    <property type="molecule type" value="Genomic_DNA"/>
</dbReference>
<dbReference type="RefSeq" id="WP_011973321.1">
    <property type="nucleotide sequence ID" value="NC_009635.1"/>
</dbReference>
<dbReference type="SMR" id="A6UUL7"/>
<dbReference type="STRING" id="419665.Maeo_0604"/>
<dbReference type="GeneID" id="5327655"/>
<dbReference type="KEGG" id="mae:Maeo_0604"/>
<dbReference type="eggNOG" id="arCOG04490">
    <property type="taxonomic scope" value="Archaea"/>
</dbReference>
<dbReference type="HOGENOM" id="CLU_114389_2_0_2"/>
<dbReference type="OrthoDB" id="30748at2157"/>
<dbReference type="Proteomes" id="UP000001106">
    <property type="component" value="Chromosome"/>
</dbReference>
<dbReference type="GO" id="GO:0008792">
    <property type="term" value="F:arginine decarboxylase activity"/>
    <property type="evidence" value="ECO:0007669"/>
    <property type="project" value="UniProtKB-UniRule"/>
</dbReference>
<dbReference type="GO" id="GO:0006527">
    <property type="term" value="P:arginine catabolic process"/>
    <property type="evidence" value="ECO:0007669"/>
    <property type="project" value="InterPro"/>
</dbReference>
<dbReference type="Gene3D" id="3.30.60.30">
    <property type="match status" value="1"/>
</dbReference>
<dbReference type="Gene3D" id="3.50.20.10">
    <property type="entry name" value="Pyruvoyl-Dependent Histidine Decarboxylase, subunit B"/>
    <property type="match status" value="1"/>
</dbReference>
<dbReference type="HAMAP" id="MF_01404">
    <property type="entry name" value="PvlArgDC"/>
    <property type="match status" value="1"/>
</dbReference>
<dbReference type="InterPro" id="IPR016104">
    <property type="entry name" value="Pyr-dep_his/arg-deCO2ase"/>
</dbReference>
<dbReference type="InterPro" id="IPR016105">
    <property type="entry name" value="Pyr-dep_his/arg-deCO2ase_sand"/>
</dbReference>
<dbReference type="InterPro" id="IPR002724">
    <property type="entry name" value="Pyruvoyl-dep_arg_deCO2ase"/>
</dbReference>
<dbReference type="NCBIfam" id="TIGR00286">
    <property type="entry name" value="pyruvoyl-dependent arginine decarboxylase"/>
    <property type="match status" value="1"/>
</dbReference>
<dbReference type="PANTHER" id="PTHR40438">
    <property type="entry name" value="PYRUVOYL-DEPENDENT ARGININE DECARBOXYLASE"/>
    <property type="match status" value="1"/>
</dbReference>
<dbReference type="PANTHER" id="PTHR40438:SF1">
    <property type="entry name" value="PYRUVOYL-DEPENDENT ARGININE DECARBOXYLASE"/>
    <property type="match status" value="1"/>
</dbReference>
<dbReference type="Pfam" id="PF01862">
    <property type="entry name" value="PvlArgDC"/>
    <property type="match status" value="1"/>
</dbReference>
<dbReference type="PIRSF" id="PIRSF005216">
    <property type="entry name" value="Pyruvoyl-dep_arg_deCO2ase"/>
    <property type="match status" value="1"/>
</dbReference>
<dbReference type="SFLD" id="SFLDF00471">
    <property type="entry name" value="Pyruvoyl-dependent_arginine_de"/>
    <property type="match status" value="1"/>
</dbReference>
<dbReference type="SFLD" id="SFLDG01170">
    <property type="entry name" value="Pyruvoyl-dependent_arginine_de"/>
    <property type="match status" value="1"/>
</dbReference>
<dbReference type="SFLD" id="SFLDS00055">
    <property type="entry name" value="Pyruvoyl-Dependent_Histidine/A"/>
    <property type="match status" value="1"/>
</dbReference>
<dbReference type="SUPFAM" id="SSF56271">
    <property type="entry name" value="Pyruvoyl-dependent histidine and arginine decarboxylases"/>
    <property type="match status" value="1"/>
</dbReference>
<protein>
    <recommendedName>
        <fullName evidence="1">Pyruvoyl-dependent arginine decarboxylase</fullName>
        <shortName evidence="1">PvlArgDC</shortName>
        <ecNumber evidence="1">4.1.1.19</ecNumber>
    </recommendedName>
    <component>
        <recommendedName>
            <fullName evidence="1">Pyruvoyl-dependent arginine decarboxylase subunit beta</fullName>
        </recommendedName>
    </component>
    <component>
        <recommendedName>
            <fullName evidence="1">Pyruvoyl-dependent arginine decarboxylase subunit alpha</fullName>
        </recommendedName>
    </component>
</protein>
<gene>
    <name evidence="1" type="primary">pdaD</name>
    <name type="ordered locus">Maeo_0604</name>
</gene>
<proteinExistence type="inferred from homology"/>
<feature type="chain" id="PRO_1000068391" description="Pyruvoyl-dependent arginine decarboxylase subunit beta" evidence="1">
    <location>
        <begin position="1"/>
        <end position="52"/>
    </location>
</feature>
<feature type="chain" id="PRO_1000068392" description="Pyruvoyl-dependent arginine decarboxylase subunit alpha" evidence="1">
    <location>
        <begin position="53"/>
        <end position="165"/>
    </location>
</feature>
<feature type="site" description="Cleavage (non-hydrolytic)" evidence="1">
    <location>
        <begin position="52"/>
        <end position="53"/>
    </location>
</feature>
<feature type="modified residue" description="Pyruvic acid (Ser)" evidence="1">
    <location>
        <position position="53"/>
    </location>
</feature>
<reference key="1">
    <citation type="submission" date="2007-06" db="EMBL/GenBank/DDBJ databases">
        <title>Complete sequence of Methanococcus aeolicus Nankai-3.</title>
        <authorList>
            <consortium name="US DOE Joint Genome Institute"/>
            <person name="Copeland A."/>
            <person name="Lucas S."/>
            <person name="Lapidus A."/>
            <person name="Barry K."/>
            <person name="Glavina del Rio T."/>
            <person name="Dalin E."/>
            <person name="Tice H."/>
            <person name="Pitluck S."/>
            <person name="Chain P."/>
            <person name="Malfatti S."/>
            <person name="Shin M."/>
            <person name="Vergez L."/>
            <person name="Schmutz J."/>
            <person name="Larimer F."/>
            <person name="Land M."/>
            <person name="Hauser L."/>
            <person name="Kyrpides N."/>
            <person name="Lykidis A."/>
            <person name="Sieprawska-Lupa M."/>
            <person name="Whitman W.B."/>
            <person name="Richardson P."/>
        </authorList>
    </citation>
    <scope>NUCLEOTIDE SEQUENCE [LARGE SCALE GENOMIC DNA]</scope>
    <source>
        <strain>ATCC BAA-1280 / DSM 17508 / OCM 812 / Nankai-3</strain>
    </source>
</reference>
<keyword id="KW-0210">Decarboxylase</keyword>
<keyword id="KW-0456">Lyase</keyword>
<keyword id="KW-0670">Pyruvate</keyword>